<accession>P80669</accession>
<feature type="peptide" id="PRO_0000044541" description="Potassium channel toxin alpha-KTx 9.3" evidence="2">
    <location>
        <begin position="1"/>
        <end position="28"/>
    </location>
</feature>
<feature type="disulfide bond" evidence="2">
    <location>
        <begin position="3"/>
        <end position="19"/>
    </location>
</feature>
<feature type="disulfide bond" evidence="2">
    <location>
        <begin position="6"/>
        <end position="24"/>
    </location>
</feature>
<feature type="disulfide bond" evidence="2">
    <location>
        <begin position="10"/>
        <end position="26"/>
    </location>
</feature>
<protein>
    <recommendedName>
        <fullName evidence="4">Potassium channel toxin alpha-KTx 9.3</fullName>
    </recommendedName>
    <alternativeName>
        <fullName evidence="3">Leiuropeptide I</fullName>
        <shortName>LpI</shortName>
    </alternativeName>
    <alternativeName>
        <fullName evidence="4">Leiuropeptide-1</fullName>
    </alternativeName>
</protein>
<name>KAX93_LEIHE</name>
<evidence type="ECO:0000250" key="1"/>
<evidence type="ECO:0000269" key="2">
    <source>
    </source>
</evidence>
<evidence type="ECO:0000303" key="3">
    <source>
    </source>
</evidence>
<evidence type="ECO:0000305" key="4"/>
<evidence type="ECO:0000305" key="5">
    <source>
    </source>
</evidence>
<sequence length="28" mass="2954">VGCEECPMHCKGKNAKPTCDNGVCNCNV</sequence>
<comment type="function">
    <text evidence="1">Inhibits voltage-gated potassium channels.</text>
</comment>
<comment type="subcellular location">
    <subcellularLocation>
        <location evidence="2">Secreted</location>
    </subcellularLocation>
</comment>
<comment type="tissue specificity">
    <text evidence="5">Expressed by the venom gland.</text>
</comment>
<comment type="domain">
    <text evidence="2">Has the structural arrangement of an alpha-helix connected to a beta-sheet by disulfide bonds (CSalpha/beta).</text>
</comment>
<comment type="similarity">
    <text evidence="4">Belongs to the short scorpion toxin superfamily. Potassium channel inhibitor family. Alpha-KTx 09 subfamily.</text>
</comment>
<reference key="1">
    <citation type="journal article" date="1997" name="J. Pept. Res.">
        <title>Characterization of a new family of toxin-like peptides from the venom of the scorpion Leiurus quinquestriatus hebraeus. 1H-NMR structure of leiuropeptide II.</title>
        <authorList>
            <person name="Buisine E."/>
            <person name="Wieruszeski J.-M."/>
            <person name="Lippens G."/>
            <person name="Wouters D."/>
            <person name="Tartar A."/>
            <person name="Sautiere P."/>
        </authorList>
    </citation>
    <scope>PROTEIN SEQUENCE</scope>
    <scope>SUBCELLULAR LOCATION</scope>
    <scope>STRUCTURE BY NMR</scope>
    <scope>DISULFIDE BONDS</scope>
    <source>
        <tissue>Venom</tissue>
    </source>
</reference>
<reference key="2">
    <citation type="journal article" date="2006" name="Toxicon">
        <title>Moving pieces in a taxonomic puzzle: venom 2D-LC/MS and data clustering analyses to infer phylogenetic relationships in some scorpions from the Buthidae family (Scorpiones).</title>
        <authorList>
            <person name="Nascimento D.G."/>
            <person name="Rates B."/>
            <person name="Santos D.M."/>
            <person name="Verano-Braga T."/>
            <person name="Barbosa-Silva A."/>
            <person name="Dutra A.A.A."/>
            <person name="Biondi I."/>
            <person name="Martin-Eauclaire M.-F."/>
            <person name="De Lima M.E."/>
            <person name="Pimenta A.M.C."/>
        </authorList>
    </citation>
    <scope>IDENTIFICATION BY MASS SPECTROMETRY</scope>
</reference>
<organism>
    <name type="scientific">Leiurus hebraeus</name>
    <name type="common">Hebrew deathstalker scorpion</name>
    <name type="synonym">Leiurus quinquestriatus hebraeus</name>
    <dbReference type="NCBI Taxonomy" id="2899558"/>
    <lineage>
        <taxon>Eukaryota</taxon>
        <taxon>Metazoa</taxon>
        <taxon>Ecdysozoa</taxon>
        <taxon>Arthropoda</taxon>
        <taxon>Chelicerata</taxon>
        <taxon>Arachnida</taxon>
        <taxon>Scorpiones</taxon>
        <taxon>Buthida</taxon>
        <taxon>Buthoidea</taxon>
        <taxon>Buthidae</taxon>
        <taxon>Leiurus</taxon>
    </lineage>
</organism>
<keyword id="KW-0903">Direct protein sequencing</keyword>
<keyword id="KW-1015">Disulfide bond</keyword>
<keyword id="KW-0964">Secreted</keyword>
<keyword id="KW-0800">Toxin</keyword>
<proteinExistence type="evidence at protein level"/>
<dbReference type="SMR" id="P80669"/>
<dbReference type="GO" id="GO:0005576">
    <property type="term" value="C:extracellular region"/>
    <property type="evidence" value="ECO:0007669"/>
    <property type="project" value="UniProtKB-SubCell"/>
</dbReference>
<dbReference type="GO" id="GO:0008200">
    <property type="term" value="F:ion channel inhibitor activity"/>
    <property type="evidence" value="ECO:0007669"/>
    <property type="project" value="InterPro"/>
</dbReference>
<dbReference type="GO" id="GO:0090729">
    <property type="term" value="F:toxin activity"/>
    <property type="evidence" value="ECO:0007669"/>
    <property type="project" value="UniProtKB-KW"/>
</dbReference>
<dbReference type="InterPro" id="IPR036574">
    <property type="entry name" value="Scorpion_toxin-like_sf"/>
</dbReference>
<dbReference type="InterPro" id="IPR008911">
    <property type="entry name" value="Toxin_alpha-KTx_8/9"/>
</dbReference>
<dbReference type="Pfam" id="PF05453">
    <property type="entry name" value="Toxin_6"/>
    <property type="match status" value="1"/>
</dbReference>
<dbReference type="SUPFAM" id="SSF57095">
    <property type="entry name" value="Scorpion toxin-like"/>
    <property type="match status" value="1"/>
</dbReference>